<accession>Q0DY72</accession>
<accession>Q6ZFX4</accession>
<comment type="subunit">
    <text>May form oligomeric structures.</text>
</comment>
<comment type="subcellular location">
    <subcellularLocation>
        <location evidence="5">Cytoplasm</location>
    </subcellularLocation>
</comment>
<comment type="alternative products">
    <event type="alternative splicing"/>
    <isoform>
        <id>Q0DY72-1</id>
        <name>1</name>
        <sequence type="displayed"/>
    </isoform>
    <isoform>
        <id>Q0DY72-2</id>
        <name>2</name>
        <sequence type="described" ref="VSP_038273"/>
    </isoform>
</comment>
<comment type="induction">
    <text evidence="3">By heat shock.</text>
</comment>
<comment type="similarity">
    <text evidence="1">Belongs to the small heat shock protein (HSP20) family.</text>
</comment>
<comment type="sequence caution" evidence="5">
    <conflict type="erroneous gene model prediction">
        <sequence resource="EMBL-CDS" id="BAD07499"/>
    </conflict>
</comment>
<comment type="sequence caution" evidence="5">
    <conflict type="erroneous gene model prediction">
        <sequence resource="EMBL-CDS" id="BAD07781"/>
    </conflict>
</comment>
<organism>
    <name type="scientific">Oryza sativa subsp. japonica</name>
    <name type="common">Rice</name>
    <dbReference type="NCBI Taxonomy" id="39947"/>
    <lineage>
        <taxon>Eukaryota</taxon>
        <taxon>Viridiplantae</taxon>
        <taxon>Streptophyta</taxon>
        <taxon>Embryophyta</taxon>
        <taxon>Tracheophyta</taxon>
        <taxon>Spermatophyta</taxon>
        <taxon>Magnoliopsida</taxon>
        <taxon>Liliopsida</taxon>
        <taxon>Poales</taxon>
        <taxon>Poaceae</taxon>
        <taxon>BOP clade</taxon>
        <taxon>Oryzoideae</taxon>
        <taxon>Oryzeae</taxon>
        <taxon>Oryzinae</taxon>
        <taxon>Oryza</taxon>
        <taxon>Oryza sativa</taxon>
    </lineage>
</organism>
<proteinExistence type="evidence at transcript level"/>
<feature type="chain" id="PRO_0000387474" description="17.8 kDa heat shock protein">
    <location>
        <begin position="1"/>
        <end position="164"/>
    </location>
</feature>
<feature type="domain" description="sHSP" evidence="1">
    <location>
        <begin position="20"/>
        <end position="154"/>
    </location>
</feature>
<feature type="region of interest" description="Disordered" evidence="2">
    <location>
        <begin position="68"/>
        <end position="93"/>
    </location>
</feature>
<feature type="splice variant" id="VSP_038273" description="In isoform 2." evidence="4">
    <location>
        <begin position="107"/>
        <end position="118"/>
    </location>
</feature>
<dbReference type="EMBL" id="AP003983">
    <property type="protein sequence ID" value="BAD07499.1"/>
    <property type="status" value="ALT_SEQ"/>
    <property type="molecule type" value="Genomic_DNA"/>
</dbReference>
<dbReference type="EMBL" id="AP004161">
    <property type="protein sequence ID" value="BAD07781.1"/>
    <property type="status" value="ALT_SEQ"/>
    <property type="molecule type" value="Genomic_DNA"/>
</dbReference>
<dbReference type="EMBL" id="AP008208">
    <property type="protein sequence ID" value="BAF09816.1"/>
    <property type="molecule type" value="Genomic_DNA"/>
</dbReference>
<dbReference type="EMBL" id="AP014958">
    <property type="protein sequence ID" value="BAS80569.1"/>
    <property type="molecule type" value="Genomic_DNA"/>
</dbReference>
<dbReference type="EMBL" id="AK107963">
    <property type="status" value="NOT_ANNOTATED_CDS"/>
    <property type="molecule type" value="mRNA"/>
</dbReference>
<dbReference type="RefSeq" id="XP_015626929.1">
    <property type="nucleotide sequence ID" value="XM_015771443.1"/>
</dbReference>
<dbReference type="SMR" id="Q0DY72"/>
<dbReference type="FunCoup" id="Q0DY72">
    <property type="interactions" value="429"/>
</dbReference>
<dbReference type="STRING" id="39947.Q0DY72"/>
<dbReference type="PaxDb" id="39947-Q0DY72"/>
<dbReference type="KEGG" id="dosa:Os02g0711300"/>
<dbReference type="eggNOG" id="KOG0710">
    <property type="taxonomic scope" value="Eukaryota"/>
</dbReference>
<dbReference type="HOGENOM" id="CLU_1471913_0_0_1"/>
<dbReference type="InParanoid" id="Q0DY72"/>
<dbReference type="OMA" id="AHVFRMD"/>
<dbReference type="OrthoDB" id="1431247at2759"/>
<dbReference type="Proteomes" id="UP000000763">
    <property type="component" value="Chromosome 2"/>
</dbReference>
<dbReference type="Proteomes" id="UP000059680">
    <property type="component" value="Chromosome 2"/>
</dbReference>
<dbReference type="GO" id="GO:0005737">
    <property type="term" value="C:cytoplasm"/>
    <property type="evidence" value="ECO:0007669"/>
    <property type="project" value="UniProtKB-SubCell"/>
</dbReference>
<dbReference type="GO" id="GO:0051082">
    <property type="term" value="F:unfolded protein binding"/>
    <property type="evidence" value="ECO:0000318"/>
    <property type="project" value="GO_Central"/>
</dbReference>
<dbReference type="GO" id="GO:0051259">
    <property type="term" value="P:protein complex oligomerization"/>
    <property type="evidence" value="ECO:0000318"/>
    <property type="project" value="GO_Central"/>
</dbReference>
<dbReference type="GO" id="GO:0006457">
    <property type="term" value="P:protein folding"/>
    <property type="evidence" value="ECO:0000318"/>
    <property type="project" value="GO_Central"/>
</dbReference>
<dbReference type="GO" id="GO:0009408">
    <property type="term" value="P:response to heat"/>
    <property type="evidence" value="ECO:0000270"/>
    <property type="project" value="UniProtKB"/>
</dbReference>
<dbReference type="GO" id="GO:0042542">
    <property type="term" value="P:response to hydrogen peroxide"/>
    <property type="evidence" value="ECO:0000318"/>
    <property type="project" value="GO_Central"/>
</dbReference>
<dbReference type="GO" id="GO:0009651">
    <property type="term" value="P:response to salt stress"/>
    <property type="evidence" value="ECO:0000318"/>
    <property type="project" value="GO_Central"/>
</dbReference>
<dbReference type="FunFam" id="2.60.40.790:FF:000093">
    <property type="entry name" value="17.4 kDa class I heat shock protein 3"/>
    <property type="match status" value="1"/>
</dbReference>
<dbReference type="Gene3D" id="2.60.40.790">
    <property type="match status" value="1"/>
</dbReference>
<dbReference type="InterPro" id="IPR002068">
    <property type="entry name" value="A-crystallin/Hsp20_dom"/>
</dbReference>
<dbReference type="InterPro" id="IPR008978">
    <property type="entry name" value="HSP20-like_chaperone"/>
</dbReference>
<dbReference type="InterPro" id="IPR031107">
    <property type="entry name" value="Small_HSP"/>
</dbReference>
<dbReference type="PANTHER" id="PTHR11527">
    <property type="entry name" value="HEAT-SHOCK PROTEIN 20 FAMILY MEMBER"/>
    <property type="match status" value="1"/>
</dbReference>
<dbReference type="Pfam" id="PF00011">
    <property type="entry name" value="HSP20"/>
    <property type="match status" value="1"/>
</dbReference>
<dbReference type="SUPFAM" id="SSF49764">
    <property type="entry name" value="HSP20-like chaperones"/>
    <property type="match status" value="1"/>
</dbReference>
<dbReference type="PROSITE" id="PS01031">
    <property type="entry name" value="SHSP"/>
    <property type="match status" value="1"/>
</dbReference>
<evidence type="ECO:0000255" key="1">
    <source>
        <dbReference type="PROSITE-ProRule" id="PRU00285"/>
    </source>
</evidence>
<evidence type="ECO:0000256" key="2">
    <source>
        <dbReference type="SAM" id="MobiDB-lite"/>
    </source>
</evidence>
<evidence type="ECO:0000269" key="3">
    <source>
    </source>
</evidence>
<evidence type="ECO:0000303" key="4">
    <source>
    </source>
</evidence>
<evidence type="ECO:0000305" key="5"/>
<gene>
    <name type="primary">HSP17.8</name>
    <name type="ordered locus">Os02g0711300</name>
    <name type="ordered locus">LOC_Os02g48140</name>
    <name type="ORF">OJ1038_A06.24</name>
    <name type="ORF">OJ1311_H06.34</name>
</gene>
<reference key="1">
    <citation type="journal article" date="2005" name="Nature">
        <title>The map-based sequence of the rice genome.</title>
        <authorList>
            <consortium name="International rice genome sequencing project (IRGSP)"/>
        </authorList>
    </citation>
    <scope>NUCLEOTIDE SEQUENCE [LARGE SCALE GENOMIC DNA]</scope>
    <source>
        <strain>cv. Nipponbare</strain>
    </source>
</reference>
<reference key="2">
    <citation type="journal article" date="2008" name="Nucleic Acids Res.">
        <title>The rice annotation project database (RAP-DB): 2008 update.</title>
        <authorList>
            <consortium name="The rice annotation project (RAP)"/>
        </authorList>
    </citation>
    <scope>GENOME REANNOTATION</scope>
    <source>
        <strain>cv. Nipponbare</strain>
    </source>
</reference>
<reference key="3">
    <citation type="journal article" date="2013" name="Rice">
        <title>Improvement of the Oryza sativa Nipponbare reference genome using next generation sequence and optical map data.</title>
        <authorList>
            <person name="Kawahara Y."/>
            <person name="de la Bastide M."/>
            <person name="Hamilton J.P."/>
            <person name="Kanamori H."/>
            <person name="McCombie W.R."/>
            <person name="Ouyang S."/>
            <person name="Schwartz D.C."/>
            <person name="Tanaka T."/>
            <person name="Wu J."/>
            <person name="Zhou S."/>
            <person name="Childs K.L."/>
            <person name="Davidson R.M."/>
            <person name="Lin H."/>
            <person name="Quesada-Ocampo L."/>
            <person name="Vaillancourt B."/>
            <person name="Sakai H."/>
            <person name="Lee S.S."/>
            <person name="Kim J."/>
            <person name="Numa H."/>
            <person name="Itoh T."/>
            <person name="Buell C.R."/>
            <person name="Matsumoto T."/>
        </authorList>
    </citation>
    <scope>GENOME REANNOTATION</scope>
    <source>
        <strain>cv. Nipponbare</strain>
    </source>
</reference>
<reference key="4">
    <citation type="journal article" date="2003" name="Science">
        <title>Collection, mapping, and annotation of over 28,000 cDNA clones from japonica rice.</title>
        <authorList>
            <consortium name="The rice full-length cDNA consortium"/>
        </authorList>
    </citation>
    <scope>NUCLEOTIDE SEQUENCE [LARGE SCALE MRNA] (ISOFORM 2)</scope>
    <source>
        <strain>cv. Nipponbare</strain>
    </source>
</reference>
<reference key="5">
    <citation type="journal article" date="2009" name="BMC Genomics">
        <title>Rice sHsp genes: genomic organization and expression profiling under stress and development.</title>
        <authorList>
            <person name="Sarkar N.K."/>
            <person name="Kim Y.-K."/>
            <person name="Grover A."/>
        </authorList>
    </citation>
    <scope>INDUCTION</scope>
    <scope>GENE FAMILY</scope>
</reference>
<name>HS178_ORYSJ</name>
<sequence>MSLVLSRMLLDRFFPGAGGVVAGEARPPMDWRETPVAHVFEMDLPGLAKDQVAVEVVDGHILRVRAGGEHEDANNAAKAGKASGEEEEENDGVRWHCRERAAGRRRAAVTQFRLPEDAAADEASARMADGVLTVTVPKRKGKKRHAGNGKAAGDDKPVCCRFWP</sequence>
<keyword id="KW-0025">Alternative splicing</keyword>
<keyword id="KW-0963">Cytoplasm</keyword>
<keyword id="KW-1185">Reference proteome</keyword>
<keyword id="KW-0346">Stress response</keyword>
<protein>
    <recommendedName>
        <fullName>17.8 kDa heat shock protein</fullName>
        <shortName>OsHsp17.8</shortName>
    </recommendedName>
</protein>